<protein>
    <recommendedName>
        <fullName evidence="1">Phosphatidylserine decarboxylase proenzyme</fullName>
        <ecNumber evidence="1">4.1.1.65</ecNumber>
    </recommendedName>
    <component>
        <recommendedName>
            <fullName evidence="1">Phosphatidylserine decarboxylase alpha chain</fullName>
        </recommendedName>
    </component>
    <component>
        <recommendedName>
            <fullName evidence="1">Phosphatidylserine decarboxylase beta chain</fullName>
        </recommendedName>
    </component>
</protein>
<proteinExistence type="inferred from homology"/>
<feature type="chain" id="PRO_1000082896" description="Phosphatidylserine decarboxylase beta chain" evidence="1">
    <location>
        <begin position="1"/>
        <end position="251"/>
    </location>
</feature>
<feature type="chain" id="PRO_1000082897" description="Phosphatidylserine decarboxylase alpha chain" evidence="1">
    <location>
        <begin position="252"/>
        <end position="287"/>
    </location>
</feature>
<feature type="active site" description="Charge relay system; for autoendoproteolytic cleavage activity" evidence="1">
    <location>
        <position position="90"/>
    </location>
</feature>
<feature type="active site" description="Charge relay system; for autoendoproteolytic cleavage activity" evidence="1">
    <location>
        <position position="147"/>
    </location>
</feature>
<feature type="active site" description="Charge relay system; for autoendoproteolytic cleavage activity" evidence="1">
    <location>
        <position position="252"/>
    </location>
</feature>
<feature type="active site" description="Schiff-base intermediate with substrate; via pyruvic acid; for decarboxylase activity" evidence="1">
    <location>
        <position position="252"/>
    </location>
</feature>
<feature type="site" description="Cleavage (non-hydrolytic); by autocatalysis" evidence="1">
    <location>
        <begin position="251"/>
        <end position="252"/>
    </location>
</feature>
<feature type="modified residue" description="Pyruvic acid (Ser); by autocatalysis" evidence="1">
    <location>
        <position position="252"/>
    </location>
</feature>
<comment type="function">
    <text evidence="1">Catalyzes the formation of phosphatidylethanolamine (PtdEtn) from phosphatidylserine (PtdSer).</text>
</comment>
<comment type="catalytic activity">
    <reaction evidence="1">
        <text>a 1,2-diacyl-sn-glycero-3-phospho-L-serine + H(+) = a 1,2-diacyl-sn-glycero-3-phosphoethanolamine + CO2</text>
        <dbReference type="Rhea" id="RHEA:20828"/>
        <dbReference type="ChEBI" id="CHEBI:15378"/>
        <dbReference type="ChEBI" id="CHEBI:16526"/>
        <dbReference type="ChEBI" id="CHEBI:57262"/>
        <dbReference type="ChEBI" id="CHEBI:64612"/>
        <dbReference type="EC" id="4.1.1.65"/>
    </reaction>
</comment>
<comment type="cofactor">
    <cofactor evidence="1">
        <name>pyruvate</name>
        <dbReference type="ChEBI" id="CHEBI:15361"/>
    </cofactor>
    <text evidence="1">Binds 1 pyruvoyl group covalently per subunit.</text>
</comment>
<comment type="pathway">
    <text evidence="1">Phospholipid metabolism; phosphatidylethanolamine biosynthesis; phosphatidylethanolamine from CDP-diacylglycerol: step 2/2.</text>
</comment>
<comment type="subunit">
    <text evidence="1">Heterodimer of a large membrane-associated beta subunit and a small pyruvoyl-containing alpha subunit.</text>
</comment>
<comment type="subcellular location">
    <subcellularLocation>
        <location evidence="1">Cell membrane</location>
        <topology evidence="1">Peripheral membrane protein</topology>
    </subcellularLocation>
</comment>
<comment type="PTM">
    <text evidence="1">Is synthesized initially as an inactive proenzyme. Formation of the active enzyme involves a self-maturation process in which the active site pyruvoyl group is generated from an internal serine residue via an autocatalytic post-translational modification. Two non-identical subunits are generated from the proenzyme in this reaction, and the pyruvate is formed at the N-terminus of the alpha chain, which is derived from the carboxyl end of the proenzyme. The autoendoproteolytic cleavage occurs by a canonical serine protease mechanism, in which the side chain hydroxyl group of the serine supplies its oxygen atom to form the C-terminus of the beta chain, while the remainder of the serine residue undergoes an oxidative deamination to produce ammonia and the pyruvoyl prosthetic group on the alpha chain. During this reaction, the Ser that is part of the protease active site of the proenzyme becomes the pyruvoyl prosthetic group, which constitutes an essential element of the active site of the mature decarboxylase.</text>
</comment>
<comment type="similarity">
    <text evidence="1">Belongs to the phosphatidylserine decarboxylase family. PSD-B subfamily. Prokaryotic type I sub-subfamily.</text>
</comment>
<keyword id="KW-1003">Cell membrane</keyword>
<keyword id="KW-0210">Decarboxylase</keyword>
<keyword id="KW-0444">Lipid biosynthesis</keyword>
<keyword id="KW-0443">Lipid metabolism</keyword>
<keyword id="KW-0456">Lyase</keyword>
<keyword id="KW-0472">Membrane</keyword>
<keyword id="KW-0594">Phospholipid biosynthesis</keyword>
<keyword id="KW-1208">Phospholipid metabolism</keyword>
<keyword id="KW-0670">Pyruvate</keyword>
<keyword id="KW-0865">Zymogen</keyword>
<sequence length="287" mass="31575">MKSRLFIISQYLLPHHLLSRLAGCVAECRARWFKNAFTAWFAKRYQVNMSEALVEDLSAYEHFNAFFTRALKPGARPLDETPGAILCPADGAVSQLGPIEHGRIFQAKGHGFSAQELLGGDPAMAAPFMGGEFATIYLSPKDYHRVHMPLAGTLREMVYVPGRLFSVNQTTAENVPELFARNERVVCLFDTERGPMAVVLVGAMIVASIETVWAGLVTPPKRELKTFRYDEASRAPIHLEKGAELGRFKLGSTAIVLFGPEQVRWAESLGAGSAVRMGQLLAEPVQA</sequence>
<gene>
    <name evidence="1" type="primary">psd</name>
    <name type="ordered locus">PputGB1_4961</name>
</gene>
<reference key="1">
    <citation type="submission" date="2008-01" db="EMBL/GenBank/DDBJ databases">
        <title>Complete sequence of Pseudomonas putida GB-1.</title>
        <authorList>
            <consortium name="US DOE Joint Genome Institute"/>
            <person name="Copeland A."/>
            <person name="Lucas S."/>
            <person name="Lapidus A."/>
            <person name="Barry K."/>
            <person name="Glavina del Rio T."/>
            <person name="Dalin E."/>
            <person name="Tice H."/>
            <person name="Pitluck S."/>
            <person name="Bruce D."/>
            <person name="Goodwin L."/>
            <person name="Chertkov O."/>
            <person name="Brettin T."/>
            <person name="Detter J.C."/>
            <person name="Han C."/>
            <person name="Kuske C.R."/>
            <person name="Schmutz J."/>
            <person name="Larimer F."/>
            <person name="Land M."/>
            <person name="Hauser L."/>
            <person name="Kyrpides N."/>
            <person name="Kim E."/>
            <person name="McCarthy J.K."/>
            <person name="Richardson P."/>
        </authorList>
    </citation>
    <scope>NUCLEOTIDE SEQUENCE [LARGE SCALE GENOMIC DNA]</scope>
    <source>
        <strain>GB-1</strain>
    </source>
</reference>
<dbReference type="EC" id="4.1.1.65" evidence="1"/>
<dbReference type="EMBL" id="CP000926">
    <property type="protein sequence ID" value="ABZ00846.1"/>
    <property type="molecule type" value="Genomic_DNA"/>
</dbReference>
<dbReference type="SMR" id="B0KL10"/>
<dbReference type="KEGG" id="ppg:PputGB1_4961"/>
<dbReference type="eggNOG" id="COG0688">
    <property type="taxonomic scope" value="Bacteria"/>
</dbReference>
<dbReference type="HOGENOM" id="CLU_029061_4_1_6"/>
<dbReference type="UniPathway" id="UPA00558">
    <property type="reaction ID" value="UER00616"/>
</dbReference>
<dbReference type="Proteomes" id="UP000002157">
    <property type="component" value="Chromosome"/>
</dbReference>
<dbReference type="GO" id="GO:0005886">
    <property type="term" value="C:plasma membrane"/>
    <property type="evidence" value="ECO:0007669"/>
    <property type="project" value="UniProtKB-SubCell"/>
</dbReference>
<dbReference type="GO" id="GO:0004609">
    <property type="term" value="F:phosphatidylserine decarboxylase activity"/>
    <property type="evidence" value="ECO:0007669"/>
    <property type="project" value="UniProtKB-UniRule"/>
</dbReference>
<dbReference type="GO" id="GO:0006646">
    <property type="term" value="P:phosphatidylethanolamine biosynthetic process"/>
    <property type="evidence" value="ECO:0007669"/>
    <property type="project" value="UniProtKB-UniRule"/>
</dbReference>
<dbReference type="HAMAP" id="MF_00662">
    <property type="entry name" value="PS_decarb_PSD_B_type1"/>
    <property type="match status" value="1"/>
</dbReference>
<dbReference type="InterPro" id="IPR003817">
    <property type="entry name" value="PS_Dcarbxylase"/>
</dbReference>
<dbReference type="InterPro" id="IPR033177">
    <property type="entry name" value="PSD-B"/>
</dbReference>
<dbReference type="InterPro" id="IPR033178">
    <property type="entry name" value="PSD_type1_pro"/>
</dbReference>
<dbReference type="NCBIfam" id="TIGR00163">
    <property type="entry name" value="PS_decarb"/>
    <property type="match status" value="1"/>
</dbReference>
<dbReference type="PANTHER" id="PTHR10067">
    <property type="entry name" value="PHOSPHATIDYLSERINE DECARBOXYLASE"/>
    <property type="match status" value="1"/>
</dbReference>
<dbReference type="PANTHER" id="PTHR10067:SF6">
    <property type="entry name" value="PHOSPHATIDYLSERINE DECARBOXYLASE PROENZYME, MITOCHONDRIAL"/>
    <property type="match status" value="1"/>
</dbReference>
<dbReference type="Pfam" id="PF02666">
    <property type="entry name" value="PS_Dcarbxylase"/>
    <property type="match status" value="1"/>
</dbReference>
<name>PSD_PSEPG</name>
<accession>B0KL10</accession>
<organism>
    <name type="scientific">Pseudomonas putida (strain GB-1)</name>
    <dbReference type="NCBI Taxonomy" id="76869"/>
    <lineage>
        <taxon>Bacteria</taxon>
        <taxon>Pseudomonadati</taxon>
        <taxon>Pseudomonadota</taxon>
        <taxon>Gammaproteobacteria</taxon>
        <taxon>Pseudomonadales</taxon>
        <taxon>Pseudomonadaceae</taxon>
        <taxon>Pseudomonas</taxon>
    </lineage>
</organism>
<evidence type="ECO:0000255" key="1">
    <source>
        <dbReference type="HAMAP-Rule" id="MF_00662"/>
    </source>
</evidence>